<name>IF2_SHEB5</name>
<evidence type="ECO:0000250" key="1"/>
<evidence type="ECO:0000255" key="2">
    <source>
        <dbReference type="HAMAP-Rule" id="MF_00100"/>
    </source>
</evidence>
<evidence type="ECO:0000256" key="3">
    <source>
        <dbReference type="SAM" id="MobiDB-lite"/>
    </source>
</evidence>
<gene>
    <name evidence="2" type="primary">infB</name>
    <name type="ordered locus">Sbal_3239</name>
</gene>
<reference key="1">
    <citation type="submission" date="2007-02" db="EMBL/GenBank/DDBJ databases">
        <title>Complete sequence of chromosome of Shewanella baltica OS155.</title>
        <authorList>
            <consortium name="US DOE Joint Genome Institute"/>
            <person name="Copeland A."/>
            <person name="Lucas S."/>
            <person name="Lapidus A."/>
            <person name="Barry K."/>
            <person name="Detter J.C."/>
            <person name="Glavina del Rio T."/>
            <person name="Hammon N."/>
            <person name="Israni S."/>
            <person name="Dalin E."/>
            <person name="Tice H."/>
            <person name="Pitluck S."/>
            <person name="Sims D.R."/>
            <person name="Brettin T."/>
            <person name="Bruce D."/>
            <person name="Han C."/>
            <person name="Tapia R."/>
            <person name="Brainard J."/>
            <person name="Schmutz J."/>
            <person name="Larimer F."/>
            <person name="Land M."/>
            <person name="Hauser L."/>
            <person name="Kyrpides N."/>
            <person name="Mikhailova N."/>
            <person name="Brettar I."/>
            <person name="Klappenbach J."/>
            <person name="Konstantinidis K."/>
            <person name="Rodrigues J."/>
            <person name="Tiedje J."/>
            <person name="Richardson P."/>
        </authorList>
    </citation>
    <scope>NUCLEOTIDE SEQUENCE [LARGE SCALE GENOMIC DNA]</scope>
    <source>
        <strain>OS155 / ATCC BAA-1091</strain>
    </source>
</reference>
<proteinExistence type="inferred from homology"/>
<keyword id="KW-0963">Cytoplasm</keyword>
<keyword id="KW-0342">GTP-binding</keyword>
<keyword id="KW-0396">Initiation factor</keyword>
<keyword id="KW-0547">Nucleotide-binding</keyword>
<keyword id="KW-0648">Protein biosynthesis</keyword>
<keyword id="KW-1185">Reference proteome</keyword>
<comment type="function">
    <text evidence="2">One of the essential components for the initiation of protein synthesis. Protects formylmethionyl-tRNA from spontaneous hydrolysis and promotes its binding to the 30S ribosomal subunits. Also involved in the hydrolysis of GTP during the formation of the 70S ribosomal complex.</text>
</comment>
<comment type="subcellular location">
    <subcellularLocation>
        <location evidence="2">Cytoplasm</location>
    </subcellularLocation>
</comment>
<comment type="similarity">
    <text evidence="2">Belongs to the TRAFAC class translation factor GTPase superfamily. Classic translation factor GTPase family. IF-2 subfamily.</text>
</comment>
<accession>A3D7K6</accession>
<feature type="chain" id="PRO_1000008328" description="Translation initiation factor IF-2">
    <location>
        <begin position="1"/>
        <end position="880"/>
    </location>
</feature>
<feature type="domain" description="tr-type G">
    <location>
        <begin position="380"/>
        <end position="549"/>
    </location>
</feature>
<feature type="region of interest" description="Disordered" evidence="3">
    <location>
        <begin position="180"/>
        <end position="289"/>
    </location>
</feature>
<feature type="region of interest" description="G1" evidence="1">
    <location>
        <begin position="389"/>
        <end position="396"/>
    </location>
</feature>
<feature type="region of interest" description="G2" evidence="1">
    <location>
        <begin position="414"/>
        <end position="418"/>
    </location>
</feature>
<feature type="region of interest" description="G3" evidence="1">
    <location>
        <begin position="435"/>
        <end position="438"/>
    </location>
</feature>
<feature type="region of interest" description="G4" evidence="1">
    <location>
        <begin position="489"/>
        <end position="492"/>
    </location>
</feature>
<feature type="region of interest" description="G5" evidence="1">
    <location>
        <begin position="525"/>
        <end position="527"/>
    </location>
</feature>
<feature type="compositionally biased region" description="Basic and acidic residues" evidence="3">
    <location>
        <begin position="180"/>
        <end position="194"/>
    </location>
</feature>
<feature type="compositionally biased region" description="Basic and acidic residues" evidence="3">
    <location>
        <begin position="202"/>
        <end position="228"/>
    </location>
</feature>
<feature type="compositionally biased region" description="Basic residues" evidence="3">
    <location>
        <begin position="249"/>
        <end position="262"/>
    </location>
</feature>
<feature type="binding site" evidence="2">
    <location>
        <begin position="389"/>
        <end position="396"/>
    </location>
    <ligand>
        <name>GTP</name>
        <dbReference type="ChEBI" id="CHEBI:37565"/>
    </ligand>
</feature>
<feature type="binding site" evidence="2">
    <location>
        <begin position="435"/>
        <end position="439"/>
    </location>
    <ligand>
        <name>GTP</name>
        <dbReference type="ChEBI" id="CHEBI:37565"/>
    </ligand>
</feature>
<feature type="binding site" evidence="2">
    <location>
        <begin position="489"/>
        <end position="492"/>
    </location>
    <ligand>
        <name>GTP</name>
        <dbReference type="ChEBI" id="CHEBI:37565"/>
    </ligand>
</feature>
<organism>
    <name type="scientific">Shewanella baltica (strain OS155 / ATCC BAA-1091)</name>
    <dbReference type="NCBI Taxonomy" id="325240"/>
    <lineage>
        <taxon>Bacteria</taxon>
        <taxon>Pseudomonadati</taxon>
        <taxon>Pseudomonadota</taxon>
        <taxon>Gammaproteobacteria</taxon>
        <taxon>Alteromonadales</taxon>
        <taxon>Shewanellaceae</taxon>
        <taxon>Shewanella</taxon>
    </lineage>
</organism>
<dbReference type="EMBL" id="CP000563">
    <property type="protein sequence ID" value="ABN62719.1"/>
    <property type="molecule type" value="Genomic_DNA"/>
</dbReference>
<dbReference type="RefSeq" id="WP_006082716.1">
    <property type="nucleotide sequence ID" value="NC_009052.1"/>
</dbReference>
<dbReference type="SMR" id="A3D7K6"/>
<dbReference type="STRING" id="325240.Sbal_3239"/>
<dbReference type="GeneID" id="11774928"/>
<dbReference type="KEGG" id="sbl:Sbal_3239"/>
<dbReference type="HOGENOM" id="CLU_006301_6_3_6"/>
<dbReference type="OrthoDB" id="9811804at2"/>
<dbReference type="Proteomes" id="UP000001557">
    <property type="component" value="Chromosome"/>
</dbReference>
<dbReference type="GO" id="GO:0005829">
    <property type="term" value="C:cytosol"/>
    <property type="evidence" value="ECO:0007669"/>
    <property type="project" value="TreeGrafter"/>
</dbReference>
<dbReference type="GO" id="GO:0005525">
    <property type="term" value="F:GTP binding"/>
    <property type="evidence" value="ECO:0007669"/>
    <property type="project" value="UniProtKB-KW"/>
</dbReference>
<dbReference type="GO" id="GO:0003924">
    <property type="term" value="F:GTPase activity"/>
    <property type="evidence" value="ECO:0007669"/>
    <property type="project" value="UniProtKB-UniRule"/>
</dbReference>
<dbReference type="GO" id="GO:0097216">
    <property type="term" value="F:guanosine tetraphosphate binding"/>
    <property type="evidence" value="ECO:0007669"/>
    <property type="project" value="UniProtKB-ARBA"/>
</dbReference>
<dbReference type="GO" id="GO:0003743">
    <property type="term" value="F:translation initiation factor activity"/>
    <property type="evidence" value="ECO:0007669"/>
    <property type="project" value="UniProtKB-UniRule"/>
</dbReference>
<dbReference type="CDD" id="cd01887">
    <property type="entry name" value="IF2_eIF5B"/>
    <property type="match status" value="1"/>
</dbReference>
<dbReference type="CDD" id="cd03702">
    <property type="entry name" value="IF2_mtIF2_II"/>
    <property type="match status" value="1"/>
</dbReference>
<dbReference type="CDD" id="cd03692">
    <property type="entry name" value="mtIF2_IVc"/>
    <property type="match status" value="1"/>
</dbReference>
<dbReference type="FunFam" id="2.40.30.10:FF:000007">
    <property type="entry name" value="Translation initiation factor IF-2"/>
    <property type="match status" value="1"/>
</dbReference>
<dbReference type="FunFam" id="2.40.30.10:FF:000008">
    <property type="entry name" value="Translation initiation factor IF-2"/>
    <property type="match status" value="1"/>
</dbReference>
<dbReference type="FunFam" id="3.40.50.10050:FF:000001">
    <property type="entry name" value="Translation initiation factor IF-2"/>
    <property type="match status" value="1"/>
</dbReference>
<dbReference type="FunFam" id="3.40.50.300:FF:000019">
    <property type="entry name" value="Translation initiation factor IF-2"/>
    <property type="match status" value="1"/>
</dbReference>
<dbReference type="Gene3D" id="3.40.50.300">
    <property type="entry name" value="P-loop containing nucleotide triphosphate hydrolases"/>
    <property type="match status" value="1"/>
</dbReference>
<dbReference type="Gene3D" id="3.30.56.50">
    <property type="entry name" value="Putative DNA-binding domain, N-terminal subdomain of bacterial translation initiation factor IF2"/>
    <property type="match status" value="1"/>
</dbReference>
<dbReference type="Gene3D" id="2.40.30.10">
    <property type="entry name" value="Translation factors"/>
    <property type="match status" value="2"/>
</dbReference>
<dbReference type="Gene3D" id="3.40.50.10050">
    <property type="entry name" value="Translation initiation factor IF- 2, domain 3"/>
    <property type="match status" value="1"/>
</dbReference>
<dbReference type="HAMAP" id="MF_00100_B">
    <property type="entry name" value="IF_2_B"/>
    <property type="match status" value="1"/>
</dbReference>
<dbReference type="InterPro" id="IPR009061">
    <property type="entry name" value="DNA-bd_dom_put_sf"/>
</dbReference>
<dbReference type="InterPro" id="IPR053905">
    <property type="entry name" value="EF-G-like_DII"/>
</dbReference>
<dbReference type="InterPro" id="IPR004161">
    <property type="entry name" value="EFTu-like_2"/>
</dbReference>
<dbReference type="InterPro" id="IPR013575">
    <property type="entry name" value="IF2_assoc_dom_bac"/>
</dbReference>
<dbReference type="InterPro" id="IPR044145">
    <property type="entry name" value="IF2_II"/>
</dbReference>
<dbReference type="InterPro" id="IPR006847">
    <property type="entry name" value="IF2_N"/>
</dbReference>
<dbReference type="InterPro" id="IPR027417">
    <property type="entry name" value="P-loop_NTPase"/>
</dbReference>
<dbReference type="InterPro" id="IPR005225">
    <property type="entry name" value="Small_GTP-bd"/>
</dbReference>
<dbReference type="InterPro" id="IPR000795">
    <property type="entry name" value="T_Tr_GTP-bd_dom"/>
</dbReference>
<dbReference type="InterPro" id="IPR000178">
    <property type="entry name" value="TF_IF2_bacterial-like"/>
</dbReference>
<dbReference type="InterPro" id="IPR015760">
    <property type="entry name" value="TIF_IF2"/>
</dbReference>
<dbReference type="InterPro" id="IPR023115">
    <property type="entry name" value="TIF_IF2_dom3"/>
</dbReference>
<dbReference type="InterPro" id="IPR036925">
    <property type="entry name" value="TIF_IF2_dom3_sf"/>
</dbReference>
<dbReference type="InterPro" id="IPR009000">
    <property type="entry name" value="Transl_B-barrel_sf"/>
</dbReference>
<dbReference type="NCBIfam" id="TIGR00487">
    <property type="entry name" value="IF-2"/>
    <property type="match status" value="1"/>
</dbReference>
<dbReference type="NCBIfam" id="TIGR00231">
    <property type="entry name" value="small_GTP"/>
    <property type="match status" value="1"/>
</dbReference>
<dbReference type="PANTHER" id="PTHR43381:SF5">
    <property type="entry name" value="TR-TYPE G DOMAIN-CONTAINING PROTEIN"/>
    <property type="match status" value="1"/>
</dbReference>
<dbReference type="PANTHER" id="PTHR43381">
    <property type="entry name" value="TRANSLATION INITIATION FACTOR IF-2-RELATED"/>
    <property type="match status" value="1"/>
</dbReference>
<dbReference type="Pfam" id="PF22042">
    <property type="entry name" value="EF-G_D2"/>
    <property type="match status" value="1"/>
</dbReference>
<dbReference type="Pfam" id="PF00009">
    <property type="entry name" value="GTP_EFTU"/>
    <property type="match status" value="1"/>
</dbReference>
<dbReference type="Pfam" id="PF03144">
    <property type="entry name" value="GTP_EFTU_D2"/>
    <property type="match status" value="1"/>
</dbReference>
<dbReference type="Pfam" id="PF11987">
    <property type="entry name" value="IF-2"/>
    <property type="match status" value="1"/>
</dbReference>
<dbReference type="Pfam" id="PF08364">
    <property type="entry name" value="IF2_assoc"/>
    <property type="match status" value="1"/>
</dbReference>
<dbReference type="Pfam" id="PF04760">
    <property type="entry name" value="IF2_N"/>
    <property type="match status" value="2"/>
</dbReference>
<dbReference type="SUPFAM" id="SSF52156">
    <property type="entry name" value="Initiation factor IF2/eIF5b, domain 3"/>
    <property type="match status" value="1"/>
</dbReference>
<dbReference type="SUPFAM" id="SSF52540">
    <property type="entry name" value="P-loop containing nucleoside triphosphate hydrolases"/>
    <property type="match status" value="1"/>
</dbReference>
<dbReference type="SUPFAM" id="SSF46955">
    <property type="entry name" value="Putative DNA-binding domain"/>
    <property type="match status" value="1"/>
</dbReference>
<dbReference type="SUPFAM" id="SSF50447">
    <property type="entry name" value="Translation proteins"/>
    <property type="match status" value="2"/>
</dbReference>
<dbReference type="PROSITE" id="PS51722">
    <property type="entry name" value="G_TR_2"/>
    <property type="match status" value="1"/>
</dbReference>
<dbReference type="PROSITE" id="PS01176">
    <property type="entry name" value="IF2"/>
    <property type="match status" value="1"/>
</dbReference>
<sequence length="880" mass="95543">MADTTVEKLATEVGKSVERLIEQFSQAGIKKGQADNVTEAEKQQLLDYLKKQHGGENAPTKMTLQRKTVSTLSVAGNGGQSKDVKVEVRKTRTFVKRDANEATLKAEEEAKVEAEALAKAKAEAEAAAAVKAKAEADAKAKADAEAKAKAKAAAEVKVVKDMSPEAEAARLEAERLKAAQEAATKRKQDEEAAKAAETARLLAEEHSKRWAEEERQRLEAEKNGDHHITTSKVARAAEDTSDLDEEKRGRRARNKSNAKKRGGKDARDGREKHMRNRSTAPESMAHGFNKPVAAVSRDVRIGETVTVSELAHLMAVKATEIIKQMMKMGSMVTINQVLDQETAQMVAEEMGHKVVLIRENELEHQVLKDRDDEDGIKQESRAPVVTIMGHVDHGKTSLLDYIRRAKVAAGEAGGITQHIGAYHVETENGMITFLDTPGHAAFTAMRARGAKATDIVVLVVAADDGVMPQTIEAIQHAKAGNVPLIVAVNKMDKPEADIDRVKSELSQHGVMSEDWGGDNMFAFVSAKTGEGVDELLEGILLQAEVLELKAVRDGMAAGVVIESQLDKGRGPVATILVQEGTLRQGDIVLCGLEYGKIRAMKDENGRSITEAGPSIPVEILGLSGVPSAGDEATVVRDERKAREVALYRQGKFRDVKLARQQKSKLENMFANMTEGEVKELNIVLKADVQGSLEAITDSLTGLSTDEVKVNIIARGVGALTETDATLAAASNAILVGFNVRADAQARKTIDSESVDLRYYSVIYNLIDEVRAAMTGMLSPEFKQQIIGLAEVRDVFKSPKLGAIAGCMVTEGTIKRSAPIRVLRDNVVIYEGELESLRRFKDDVAEVRNGMECGIGVKNYNDVRVGDQIEVFETVEIARTL</sequence>
<protein>
    <recommendedName>
        <fullName evidence="2">Translation initiation factor IF-2</fullName>
    </recommendedName>
</protein>